<sequence length="256" mass="27737">MEIIPAIDLLNGKCVRLNQGNYNEVTKFNSDPVKQAEIWESKGAKRLHLVDLDGAKTGEPINDLTIKEIKKSITIPIQLGGGIRSIDRAKELFDIGIDRIILGTIAIEKPELVKDLSKEYPKRIAVGIDAKEGMVATRGWLKQSEISSLDLAKQLNDLDLAAIISTDIATDGTLKGPNVQALREIAEISINPVIASGGIGSIADLISLADFADEGIEGIIVGRALYDGSIDLKEAILTLKNLLLQDAFNEKDKFLV</sequence>
<proteinExistence type="inferred from homology"/>
<protein>
    <recommendedName>
        <fullName evidence="1">1-(5-phosphoribosyl)-5-[(5-phosphoribosylamino)methylideneamino] imidazole-4-carboxamide isomerase</fullName>
        <ecNumber evidence="1">5.3.1.16</ecNumber>
    </recommendedName>
    <alternativeName>
        <fullName evidence="1">Phosphoribosylformimino-5-aminoimidazole carboxamide ribotide isomerase</fullName>
    </alternativeName>
</protein>
<comment type="catalytic activity">
    <reaction evidence="1">
        <text>1-(5-phospho-beta-D-ribosyl)-5-[(5-phospho-beta-D-ribosylamino)methylideneamino]imidazole-4-carboxamide = 5-[(5-phospho-1-deoxy-D-ribulos-1-ylimino)methylamino]-1-(5-phospho-beta-D-ribosyl)imidazole-4-carboxamide</text>
        <dbReference type="Rhea" id="RHEA:15469"/>
        <dbReference type="ChEBI" id="CHEBI:58435"/>
        <dbReference type="ChEBI" id="CHEBI:58525"/>
        <dbReference type="EC" id="5.3.1.16"/>
    </reaction>
</comment>
<comment type="pathway">
    <text evidence="1">Amino-acid biosynthesis; L-histidine biosynthesis; L-histidine from 5-phospho-alpha-D-ribose 1-diphosphate: step 4/9.</text>
</comment>
<comment type="subcellular location">
    <subcellularLocation>
        <location evidence="1">Cytoplasm</location>
    </subcellularLocation>
</comment>
<comment type="similarity">
    <text evidence="1">Belongs to the HisA/HisF family.</text>
</comment>
<organism>
    <name type="scientific">Prochlorococcus marinus (strain NATL2A)</name>
    <dbReference type="NCBI Taxonomy" id="59920"/>
    <lineage>
        <taxon>Bacteria</taxon>
        <taxon>Bacillati</taxon>
        <taxon>Cyanobacteriota</taxon>
        <taxon>Cyanophyceae</taxon>
        <taxon>Synechococcales</taxon>
        <taxon>Prochlorococcaceae</taxon>
        <taxon>Prochlorococcus</taxon>
    </lineage>
</organism>
<dbReference type="EC" id="5.3.1.16" evidence="1"/>
<dbReference type="EMBL" id="CP000095">
    <property type="protein sequence ID" value="AAZ57696.1"/>
    <property type="molecule type" value="Genomic_DNA"/>
</dbReference>
<dbReference type="RefSeq" id="WP_011293738.1">
    <property type="nucleotide sequence ID" value="NC_007335.2"/>
</dbReference>
<dbReference type="SMR" id="Q46LD2"/>
<dbReference type="STRING" id="59920.PMN2A_0204"/>
<dbReference type="KEGG" id="pmn:PMN2A_0204"/>
<dbReference type="HOGENOM" id="CLU_048577_1_1_3"/>
<dbReference type="OrthoDB" id="9807749at2"/>
<dbReference type="PhylomeDB" id="Q46LD2"/>
<dbReference type="UniPathway" id="UPA00031">
    <property type="reaction ID" value="UER00009"/>
</dbReference>
<dbReference type="Proteomes" id="UP000002535">
    <property type="component" value="Chromosome"/>
</dbReference>
<dbReference type="GO" id="GO:0005737">
    <property type="term" value="C:cytoplasm"/>
    <property type="evidence" value="ECO:0007669"/>
    <property type="project" value="UniProtKB-SubCell"/>
</dbReference>
<dbReference type="GO" id="GO:0003949">
    <property type="term" value="F:1-(5-phosphoribosyl)-5-[(5-phosphoribosylamino)methylideneamino]imidazole-4-carboxamide isomerase activity"/>
    <property type="evidence" value="ECO:0007669"/>
    <property type="project" value="UniProtKB-UniRule"/>
</dbReference>
<dbReference type="GO" id="GO:0000105">
    <property type="term" value="P:L-histidine biosynthetic process"/>
    <property type="evidence" value="ECO:0007669"/>
    <property type="project" value="UniProtKB-UniRule"/>
</dbReference>
<dbReference type="GO" id="GO:0000162">
    <property type="term" value="P:L-tryptophan biosynthetic process"/>
    <property type="evidence" value="ECO:0007669"/>
    <property type="project" value="TreeGrafter"/>
</dbReference>
<dbReference type="CDD" id="cd04732">
    <property type="entry name" value="HisA"/>
    <property type="match status" value="1"/>
</dbReference>
<dbReference type="FunFam" id="3.20.20.70:FF:000009">
    <property type="entry name" value="1-(5-phosphoribosyl)-5-[(5-phosphoribosylamino)methylideneamino] imidazole-4-carboxamide isomerase"/>
    <property type="match status" value="1"/>
</dbReference>
<dbReference type="Gene3D" id="3.20.20.70">
    <property type="entry name" value="Aldolase class I"/>
    <property type="match status" value="1"/>
</dbReference>
<dbReference type="HAMAP" id="MF_01014">
    <property type="entry name" value="HisA"/>
    <property type="match status" value="1"/>
</dbReference>
<dbReference type="InterPro" id="IPR013785">
    <property type="entry name" value="Aldolase_TIM"/>
</dbReference>
<dbReference type="InterPro" id="IPR006062">
    <property type="entry name" value="His_biosynth"/>
</dbReference>
<dbReference type="InterPro" id="IPR006063">
    <property type="entry name" value="HisA_bact_arch"/>
</dbReference>
<dbReference type="InterPro" id="IPR044524">
    <property type="entry name" value="Isoase_HisA-like"/>
</dbReference>
<dbReference type="InterPro" id="IPR023016">
    <property type="entry name" value="Isoase_HisA-like_bact"/>
</dbReference>
<dbReference type="InterPro" id="IPR011060">
    <property type="entry name" value="RibuloseP-bd_barrel"/>
</dbReference>
<dbReference type="NCBIfam" id="TIGR00007">
    <property type="entry name" value="1-(5-phosphoribosyl)-5-[(5-phosphoribosylamino)methylideneamino]imidazole-4-carboxamide isomerase"/>
    <property type="match status" value="1"/>
</dbReference>
<dbReference type="PANTHER" id="PTHR43090">
    <property type="entry name" value="1-(5-PHOSPHORIBOSYL)-5-[(5-PHOSPHORIBOSYLAMINO)METHYLIDENEAMINO] IMIDAZOLE-4-CARBOXAMIDE ISOMERASE"/>
    <property type="match status" value="1"/>
</dbReference>
<dbReference type="PANTHER" id="PTHR43090:SF2">
    <property type="entry name" value="1-(5-PHOSPHORIBOSYL)-5-[(5-PHOSPHORIBOSYLAMINO)METHYLIDENEAMINO] IMIDAZOLE-4-CARBOXAMIDE ISOMERASE"/>
    <property type="match status" value="1"/>
</dbReference>
<dbReference type="Pfam" id="PF00977">
    <property type="entry name" value="His_biosynth"/>
    <property type="match status" value="1"/>
</dbReference>
<dbReference type="SUPFAM" id="SSF51366">
    <property type="entry name" value="Ribulose-phoshate binding barrel"/>
    <property type="match status" value="1"/>
</dbReference>
<name>HIS4_PROMT</name>
<reference key="1">
    <citation type="journal article" date="2007" name="PLoS Genet.">
        <title>Patterns and implications of gene gain and loss in the evolution of Prochlorococcus.</title>
        <authorList>
            <person name="Kettler G.C."/>
            <person name="Martiny A.C."/>
            <person name="Huang K."/>
            <person name="Zucker J."/>
            <person name="Coleman M.L."/>
            <person name="Rodrigue S."/>
            <person name="Chen F."/>
            <person name="Lapidus A."/>
            <person name="Ferriera S."/>
            <person name="Johnson J."/>
            <person name="Steglich C."/>
            <person name="Church G.M."/>
            <person name="Richardson P."/>
            <person name="Chisholm S.W."/>
        </authorList>
    </citation>
    <scope>NUCLEOTIDE SEQUENCE [LARGE SCALE GENOMIC DNA]</scope>
    <source>
        <strain>NATL2A</strain>
    </source>
</reference>
<gene>
    <name evidence="1" type="primary">hisA</name>
    <name type="ordered locus">PMN2A_0204</name>
</gene>
<evidence type="ECO:0000255" key="1">
    <source>
        <dbReference type="HAMAP-Rule" id="MF_01014"/>
    </source>
</evidence>
<feature type="chain" id="PRO_0000229070" description="1-(5-phosphoribosyl)-5-[(5-phosphoribosylamino)methylideneamino] imidazole-4-carboxamide isomerase">
    <location>
        <begin position="1"/>
        <end position="256"/>
    </location>
</feature>
<feature type="active site" description="Proton acceptor" evidence="1">
    <location>
        <position position="8"/>
    </location>
</feature>
<feature type="active site" description="Proton donor" evidence="1">
    <location>
        <position position="129"/>
    </location>
</feature>
<keyword id="KW-0028">Amino-acid biosynthesis</keyword>
<keyword id="KW-0963">Cytoplasm</keyword>
<keyword id="KW-0368">Histidine biosynthesis</keyword>
<keyword id="KW-0413">Isomerase</keyword>
<keyword id="KW-1185">Reference proteome</keyword>
<accession>Q46LD2</accession>